<name>RPOE_STRT1</name>
<dbReference type="EMBL" id="CP000024">
    <property type="protein sequence ID" value="AAV61748.1"/>
    <property type="molecule type" value="Genomic_DNA"/>
</dbReference>
<dbReference type="RefSeq" id="WP_011225340.1">
    <property type="nucleotide sequence ID" value="NC_006449.1"/>
</dbReference>
<dbReference type="SMR" id="Q5M1S8"/>
<dbReference type="GeneID" id="66898079"/>
<dbReference type="KEGG" id="stc:str0133"/>
<dbReference type="HOGENOM" id="CLU_116648_0_0_9"/>
<dbReference type="GO" id="GO:0000428">
    <property type="term" value="C:DNA-directed RNA polymerase complex"/>
    <property type="evidence" value="ECO:0007669"/>
    <property type="project" value="UniProtKB-KW"/>
</dbReference>
<dbReference type="GO" id="GO:0003899">
    <property type="term" value="F:DNA-directed RNA polymerase activity"/>
    <property type="evidence" value="ECO:0007669"/>
    <property type="project" value="UniProtKB-UniRule"/>
</dbReference>
<dbReference type="GO" id="GO:0006351">
    <property type="term" value="P:DNA-templated transcription"/>
    <property type="evidence" value="ECO:0007669"/>
    <property type="project" value="InterPro"/>
</dbReference>
<dbReference type="GO" id="GO:0006355">
    <property type="term" value="P:regulation of DNA-templated transcription"/>
    <property type="evidence" value="ECO:0007669"/>
    <property type="project" value="UniProtKB-UniRule"/>
</dbReference>
<dbReference type="Gene3D" id="1.10.10.1250">
    <property type="entry name" value="RNA polymerase, subunit delta, N-terminal domain"/>
    <property type="match status" value="1"/>
</dbReference>
<dbReference type="HAMAP" id="MF_00357">
    <property type="entry name" value="RNApol_bact_RpoE"/>
    <property type="match status" value="1"/>
</dbReference>
<dbReference type="InterPro" id="IPR007759">
    <property type="entry name" value="Asxl_HARE-HTH"/>
</dbReference>
<dbReference type="InterPro" id="IPR038087">
    <property type="entry name" value="RNAP_delta_N_dom_sf"/>
</dbReference>
<dbReference type="InterPro" id="IPR029757">
    <property type="entry name" value="RpoE"/>
</dbReference>
<dbReference type="NCBIfam" id="TIGR04567">
    <property type="entry name" value="RNAP_delt_lowGC"/>
    <property type="match status" value="1"/>
</dbReference>
<dbReference type="Pfam" id="PF05066">
    <property type="entry name" value="HARE-HTH"/>
    <property type="match status" value="1"/>
</dbReference>
<dbReference type="PROSITE" id="PS51913">
    <property type="entry name" value="HTH_HARE"/>
    <property type="match status" value="1"/>
</dbReference>
<sequence>MELDVFAGQEKSELSMIEVARAILETRGRDKEMYFNDLVNEIQNYLEKSDADIRSSLPFFYSDLNTDGSFIPLGDNKWGLRSWYAIDEIDEEVITLEDIDENAPKRKNKKVNAFMDGDEDAIDYNDDDPEDENFTPSSAILEYDNDNEDDENAEVESYDSELNEIIPDDDLDDVELSEEDDDDDDDYEDETND</sequence>
<comment type="function">
    <text evidence="1">Participates in both the initiation and recycling phases of transcription. In the presence of the delta subunit, RNAP displays an increased specificity of transcription, a decreased affinity for nucleic acids, and an increased efficiency of RNA synthesis because of enhanced recycling.</text>
</comment>
<comment type="subunit">
    <text evidence="1">RNAP is composed of a core of 2 alpha, a beta and a beta' subunits. The core is associated with a delta subunit and one of several sigma factors.</text>
</comment>
<comment type="similarity">
    <text evidence="1">Belongs to the RpoE family.</text>
</comment>
<reference key="1">
    <citation type="journal article" date="2004" name="Nat. Biotechnol.">
        <title>Complete sequence and comparative genome analysis of the dairy bacterium Streptococcus thermophilus.</title>
        <authorList>
            <person name="Bolotin A."/>
            <person name="Quinquis B."/>
            <person name="Renault P."/>
            <person name="Sorokin A."/>
            <person name="Ehrlich S.D."/>
            <person name="Kulakauskas S."/>
            <person name="Lapidus A."/>
            <person name="Goltsman E."/>
            <person name="Mazur M."/>
            <person name="Pusch G.D."/>
            <person name="Fonstein M."/>
            <person name="Overbeek R."/>
            <person name="Kyprides N."/>
            <person name="Purnelle B."/>
            <person name="Prozzi D."/>
            <person name="Ngui K."/>
            <person name="Masuy D."/>
            <person name="Hancy F."/>
            <person name="Burteau S."/>
            <person name="Boutry M."/>
            <person name="Delcour J."/>
            <person name="Goffeau A."/>
            <person name="Hols P."/>
        </authorList>
    </citation>
    <scope>NUCLEOTIDE SEQUENCE [LARGE SCALE GENOMIC DNA]</scope>
    <source>
        <strain>CNRZ 1066</strain>
    </source>
</reference>
<gene>
    <name evidence="1" type="primary">rpoE</name>
    <name type="ordered locus">str0133</name>
</gene>
<protein>
    <recommendedName>
        <fullName evidence="1">Probable DNA-directed RNA polymerase subunit delta</fullName>
    </recommendedName>
    <alternativeName>
        <fullName evidence="1">RNAP delta factor</fullName>
    </alternativeName>
</protein>
<organism>
    <name type="scientific">Streptococcus thermophilus (strain CNRZ 1066)</name>
    <dbReference type="NCBI Taxonomy" id="299768"/>
    <lineage>
        <taxon>Bacteria</taxon>
        <taxon>Bacillati</taxon>
        <taxon>Bacillota</taxon>
        <taxon>Bacilli</taxon>
        <taxon>Lactobacillales</taxon>
        <taxon>Streptococcaceae</taxon>
        <taxon>Streptococcus</taxon>
    </lineage>
</organism>
<proteinExistence type="inferred from homology"/>
<accession>Q5M1S8</accession>
<keyword id="KW-0240">DNA-directed RNA polymerase</keyword>
<keyword id="KW-0548">Nucleotidyltransferase</keyword>
<keyword id="KW-0804">Transcription</keyword>
<keyword id="KW-0808">Transferase</keyword>
<evidence type="ECO:0000255" key="1">
    <source>
        <dbReference type="HAMAP-Rule" id="MF_00357"/>
    </source>
</evidence>
<evidence type="ECO:0000255" key="2">
    <source>
        <dbReference type="PROSITE-ProRule" id="PRU01261"/>
    </source>
</evidence>
<evidence type="ECO:0000256" key="3">
    <source>
        <dbReference type="SAM" id="MobiDB-lite"/>
    </source>
</evidence>
<feature type="chain" id="PRO_0000303149" description="Probable DNA-directed RNA polymerase subunit delta">
    <location>
        <begin position="1"/>
        <end position="193"/>
    </location>
</feature>
<feature type="domain" description="HTH HARE-type" evidence="2">
    <location>
        <begin position="14"/>
        <end position="83"/>
    </location>
</feature>
<feature type="region of interest" description="Disordered" evidence="3">
    <location>
        <begin position="119"/>
        <end position="193"/>
    </location>
</feature>
<feature type="compositionally biased region" description="Acidic residues" evidence="3">
    <location>
        <begin position="119"/>
        <end position="133"/>
    </location>
</feature>
<feature type="compositionally biased region" description="Acidic residues" evidence="3">
    <location>
        <begin position="143"/>
        <end position="193"/>
    </location>
</feature>